<dbReference type="EC" id="3.2.1.18" evidence="4"/>
<dbReference type="EMBL" id="M31228">
    <property type="protein sequence ID" value="AAA46798.1"/>
    <property type="molecule type" value="Genomic_RNA"/>
</dbReference>
<dbReference type="PIR" id="A34682">
    <property type="entry name" value="HNNZ39"/>
</dbReference>
<dbReference type="SMR" id="P16071"/>
<dbReference type="CAZy" id="GH83">
    <property type="family name" value="Glycoside Hydrolase Family 83"/>
</dbReference>
<dbReference type="GlyCosmos" id="P16071">
    <property type="glycosylation" value="3 sites, No reported glycans"/>
</dbReference>
<dbReference type="GO" id="GO:0020002">
    <property type="term" value="C:host cell plasma membrane"/>
    <property type="evidence" value="ECO:0007669"/>
    <property type="project" value="UniProtKB-SubCell"/>
</dbReference>
<dbReference type="GO" id="GO:0016020">
    <property type="term" value="C:membrane"/>
    <property type="evidence" value="ECO:0007669"/>
    <property type="project" value="UniProtKB-KW"/>
</dbReference>
<dbReference type="GO" id="GO:0019031">
    <property type="term" value="C:viral envelope"/>
    <property type="evidence" value="ECO:0007669"/>
    <property type="project" value="UniProtKB-KW"/>
</dbReference>
<dbReference type="GO" id="GO:0055036">
    <property type="term" value="C:virion membrane"/>
    <property type="evidence" value="ECO:0007669"/>
    <property type="project" value="UniProtKB-SubCell"/>
</dbReference>
<dbReference type="GO" id="GO:0004308">
    <property type="term" value="F:exo-alpha-sialidase activity"/>
    <property type="evidence" value="ECO:0007669"/>
    <property type="project" value="UniProtKB-EC"/>
</dbReference>
<dbReference type="GO" id="GO:0046789">
    <property type="term" value="F:host cell surface receptor binding"/>
    <property type="evidence" value="ECO:0007669"/>
    <property type="project" value="InterPro"/>
</dbReference>
<dbReference type="GO" id="GO:0046718">
    <property type="term" value="P:symbiont entry into host cell"/>
    <property type="evidence" value="ECO:0007669"/>
    <property type="project" value="UniProtKB-KW"/>
</dbReference>
<dbReference type="GO" id="GO:0019062">
    <property type="term" value="P:virion attachment to host cell"/>
    <property type="evidence" value="ECO:0007669"/>
    <property type="project" value="UniProtKB-KW"/>
</dbReference>
<dbReference type="CDD" id="cd15469">
    <property type="entry name" value="HN"/>
    <property type="match status" value="1"/>
</dbReference>
<dbReference type="Gene3D" id="2.120.10.10">
    <property type="match status" value="1"/>
</dbReference>
<dbReference type="InterPro" id="IPR016285">
    <property type="entry name" value="Hemagglutn-neuramid"/>
</dbReference>
<dbReference type="InterPro" id="IPR000665">
    <property type="entry name" value="Hemagglutn/HN"/>
</dbReference>
<dbReference type="InterPro" id="IPR036278">
    <property type="entry name" value="Sialidase_sf"/>
</dbReference>
<dbReference type="Pfam" id="PF00423">
    <property type="entry name" value="HN"/>
    <property type="match status" value="1"/>
</dbReference>
<dbReference type="PIRSF" id="PIRSF001072">
    <property type="entry name" value="Hemagglut-neuramid_paramyxoV"/>
    <property type="match status" value="1"/>
</dbReference>
<dbReference type="SUPFAM" id="SSF50939">
    <property type="entry name" value="Sialidases"/>
    <property type="match status" value="1"/>
</dbReference>
<feature type="chain" id="PRO_0000142621" description="Hemagglutinin-neuraminidase">
    <location>
        <begin position="1"/>
        <end position="575"/>
    </location>
</feature>
<feature type="topological domain" description="Intravirion" evidence="5">
    <location>
        <begin position="1"/>
        <end position="34"/>
    </location>
</feature>
<feature type="transmembrane region" description="Helical" evidence="5">
    <location>
        <begin position="35"/>
        <end position="55"/>
    </location>
</feature>
<feature type="topological domain" description="Virion surface" evidence="5">
    <location>
        <begin position="56"/>
        <end position="575"/>
    </location>
</feature>
<feature type="region of interest" description="Involved in neuraminidase activity" evidence="3">
    <location>
        <begin position="254"/>
        <end position="259"/>
    </location>
</feature>
<feature type="glycosylation site" description="N-linked (GlcNAc...) asparagine; by host" evidence="5">
    <location>
        <position position="77"/>
    </location>
</feature>
<feature type="glycosylation site" description="N-linked (GlcNAc...) asparagine; by host" evidence="5">
    <location>
        <position position="499"/>
    </location>
</feature>
<feature type="glycosylation site" description="N-linked (GlcNAc...) asparagine; by host" evidence="5">
    <location>
        <position position="511"/>
    </location>
</feature>
<feature type="disulfide bond" evidence="4">
    <location>
        <begin position="192"/>
        <end position="216"/>
    </location>
</feature>
<feature type="disulfide bond" evidence="4">
    <location>
        <begin position="258"/>
        <end position="271"/>
    </location>
</feature>
<feature type="disulfide bond" evidence="4">
    <location>
        <begin position="357"/>
        <end position="469"/>
    </location>
</feature>
<feature type="disulfide bond" evidence="4">
    <location>
        <begin position="463"/>
        <end position="473"/>
    </location>
</feature>
<feature type="disulfide bond" evidence="4">
    <location>
        <begin position="535"/>
        <end position="544"/>
    </location>
</feature>
<organism>
    <name type="scientific">Human parainfluenza 1 virus (strain Washington/1957)</name>
    <name type="common">HPIV-1</name>
    <dbReference type="NCBI Taxonomy" id="11211"/>
    <lineage>
        <taxon>Viruses</taxon>
        <taxon>Riboviria</taxon>
        <taxon>Orthornavirae</taxon>
        <taxon>Negarnaviricota</taxon>
        <taxon>Haploviricotina</taxon>
        <taxon>Monjiviricetes</taxon>
        <taxon>Mononegavirales</taxon>
        <taxon>Paramyxoviridae</taxon>
        <taxon>Feraresvirinae</taxon>
        <taxon>Respirovirus</taxon>
        <taxon>Respirovirus laryngotracheitidis</taxon>
    </lineage>
</organism>
<reference key="1">
    <citation type="journal article" date="1990" name="Virology">
        <title>The hemagglutinin-neuraminidase glycoproteins of human parainfluenza virus type 1 and Sendai virus have high structure-function similarity with limited antigenic cross-reactivity.</title>
        <authorList>
            <person name="Gorman W.L."/>
            <person name="Gill D.S."/>
            <person name="Scroggs R.A."/>
            <person name="Portner A."/>
        </authorList>
    </citation>
    <scope>NUCLEOTIDE SEQUENCE [GENOMIC RNA]</scope>
</reference>
<comment type="function">
    <text evidence="1">Attaches the virus to sialic acid-containing cell receptors and thereby initiating infection. Binding of HN protein to the receptor induces a conformational change that allows the F protein to trigger virion/cell membranes fusion (By similarity).</text>
</comment>
<comment type="function">
    <text evidence="1">Neuraminidase activity ensures the efficient spread of the virus by dissociating the mature virions from the neuraminic acid containing glycoproteins.</text>
</comment>
<comment type="catalytic activity">
    <reaction evidence="4">
        <text>Hydrolysis of alpha-(2-&gt;3)-, alpha-(2-&gt;6)-, alpha-(2-&gt;8)- glycosidic linkages of terminal sialic acid residues in oligosaccharides, glycoproteins, glycolipids, colominic acid and synthetic substrates.</text>
        <dbReference type="EC" id="3.2.1.18"/>
    </reaction>
</comment>
<comment type="subunit">
    <text evidence="2 4">Homotetramer; composed of disulfide-linked homodimers (By similarity). Interacts with F protein trimer (By similarity).</text>
</comment>
<comment type="subcellular location">
    <subcellularLocation>
        <location evidence="6">Virion membrane</location>
        <topology evidence="6">Single-pass type II membrane protein</topology>
    </subcellularLocation>
    <subcellularLocation>
        <location evidence="6">Host cell membrane</location>
        <topology evidence="6">Single-pass type II membrane protein</topology>
    </subcellularLocation>
</comment>
<comment type="domain">
    <text evidence="4">The C-terminus (head domain) is involved in binding the cellular receptor.</text>
</comment>
<comment type="similarity">
    <text evidence="6">Belongs to the paramyxoviruses hemagglutinin-neuraminidase family.</text>
</comment>
<accession>P16071</accession>
<sequence>MAEKGKTNSSYWSTTRNDNSTVNTYIDTPAGKTHIWLLIATTMHTILSFIIMILCIDLIIKQDTCMKTNIMTVSSMNESAKTIKETITELIRQEVISRTINIQSSVQSGIPILLNKQSRDLTQLIEKSCNRQELAQICENTIAIHHADGISPLDPHDFWRCPVGEPLLSNNPNISLLPGPSLLSGSTTISGCVRLPSLSIGDAIYAYSSNLITQGCADIGKSYQVLQLGYISLNSDMYPDLKPVISHTYDINDNRKSCSVIAAGTRGYQLCSLPTVNETTDYSSEGIEDLVFDILDLKGKTKSHRYKNEDITFDHPFSAMYPSVGSGIKIENTLIFLGYGGLTTPLQGDTKCVTNRCANVNQSVCNDALKITWLKKRQVVNVLIRINNYLSDRPKIVVETIPITQNYLGAEGRLLKLGKKIYIYTRSSGWHSHLQIGSLDINNPMTIKWAPHEVLSRPGNQDCNWYNRCPRECISGVYTDAYPLSPDAVNVATTTLYANTSRVNPTIMYSNTSEIINMLRLKNVQLEAAYTTTSCITHFGKGYCFHIVEINQTSLNTLQPMLFKTSIPKICKITS</sequence>
<gene>
    <name type="primary">HN</name>
</gene>
<proteinExistence type="inferred from homology"/>
<protein>
    <recommendedName>
        <fullName>Hemagglutinin-neuraminidase</fullName>
        <ecNumber evidence="4">3.2.1.18</ecNumber>
    </recommendedName>
</protein>
<name>HN_PI1HW</name>
<keyword id="KW-1015">Disulfide bond</keyword>
<keyword id="KW-0325">Glycoprotein</keyword>
<keyword id="KW-0348">Hemagglutinin</keyword>
<keyword id="KW-1032">Host cell membrane</keyword>
<keyword id="KW-1043">Host membrane</keyword>
<keyword id="KW-0945">Host-virus interaction</keyword>
<keyword id="KW-0378">Hydrolase</keyword>
<keyword id="KW-0472">Membrane</keyword>
<keyword id="KW-0735">Signal-anchor</keyword>
<keyword id="KW-0812">Transmembrane</keyword>
<keyword id="KW-1133">Transmembrane helix</keyword>
<keyword id="KW-1161">Viral attachment to host cell</keyword>
<keyword id="KW-0261">Viral envelope protein</keyword>
<keyword id="KW-0946">Virion</keyword>
<keyword id="KW-1160">Virus entry into host cell</keyword>
<organismHost>
    <name type="scientific">Homo sapiens</name>
    <name type="common">Human</name>
    <dbReference type="NCBI Taxonomy" id="9606"/>
</organismHost>
<evidence type="ECO:0000250" key="1"/>
<evidence type="ECO:0000250" key="2">
    <source>
        <dbReference type="UniProtKB" id="P04853"/>
    </source>
</evidence>
<evidence type="ECO:0000250" key="3">
    <source>
        <dbReference type="UniProtKB" id="Q91UL0"/>
    </source>
</evidence>
<evidence type="ECO:0000250" key="4">
    <source>
        <dbReference type="UniProtKB" id="Q9WAF5"/>
    </source>
</evidence>
<evidence type="ECO:0000255" key="5"/>
<evidence type="ECO:0000305" key="6"/>